<name>PDXJ_LARHH</name>
<feature type="chain" id="PRO_1000204810" description="Pyridoxine 5'-phosphate synthase">
    <location>
        <begin position="1"/>
        <end position="244"/>
    </location>
</feature>
<feature type="active site" description="Proton acceptor" evidence="1">
    <location>
        <position position="43"/>
    </location>
</feature>
<feature type="active site" description="Proton acceptor" evidence="1">
    <location>
        <position position="70"/>
    </location>
</feature>
<feature type="active site" description="Proton donor" evidence="1">
    <location>
        <position position="191"/>
    </location>
</feature>
<feature type="binding site" evidence="1">
    <location>
        <position position="7"/>
    </location>
    <ligand>
        <name>3-amino-2-oxopropyl phosphate</name>
        <dbReference type="ChEBI" id="CHEBI:57279"/>
    </ligand>
</feature>
<feature type="binding site" evidence="1">
    <location>
        <begin position="9"/>
        <end position="10"/>
    </location>
    <ligand>
        <name>1-deoxy-D-xylulose 5-phosphate</name>
        <dbReference type="ChEBI" id="CHEBI:57792"/>
    </ligand>
</feature>
<feature type="binding site" evidence="1">
    <location>
        <position position="18"/>
    </location>
    <ligand>
        <name>3-amino-2-oxopropyl phosphate</name>
        <dbReference type="ChEBI" id="CHEBI:57279"/>
    </ligand>
</feature>
<feature type="binding site" evidence="1">
    <location>
        <position position="45"/>
    </location>
    <ligand>
        <name>1-deoxy-D-xylulose 5-phosphate</name>
        <dbReference type="ChEBI" id="CHEBI:57792"/>
    </ligand>
</feature>
<feature type="binding site" evidence="1">
    <location>
        <position position="50"/>
    </location>
    <ligand>
        <name>1-deoxy-D-xylulose 5-phosphate</name>
        <dbReference type="ChEBI" id="CHEBI:57792"/>
    </ligand>
</feature>
<feature type="binding site" evidence="1">
    <location>
        <position position="100"/>
    </location>
    <ligand>
        <name>1-deoxy-D-xylulose 5-phosphate</name>
        <dbReference type="ChEBI" id="CHEBI:57792"/>
    </ligand>
</feature>
<feature type="binding site" evidence="1">
    <location>
        <position position="192"/>
    </location>
    <ligand>
        <name>3-amino-2-oxopropyl phosphate</name>
        <dbReference type="ChEBI" id="CHEBI:57279"/>
    </ligand>
</feature>
<feature type="binding site" evidence="1">
    <location>
        <begin position="213"/>
        <end position="214"/>
    </location>
    <ligand>
        <name>3-amino-2-oxopropyl phosphate</name>
        <dbReference type="ChEBI" id="CHEBI:57279"/>
    </ligand>
</feature>
<feature type="site" description="Transition state stabilizer" evidence="1">
    <location>
        <position position="151"/>
    </location>
</feature>
<proteinExistence type="inferred from homology"/>
<comment type="function">
    <text evidence="1">Catalyzes the complicated ring closure reaction between the two acyclic compounds 1-deoxy-D-xylulose-5-phosphate (DXP) and 3-amino-2-oxopropyl phosphate (1-amino-acetone-3-phosphate or AAP) to form pyridoxine 5'-phosphate (PNP) and inorganic phosphate.</text>
</comment>
<comment type="catalytic activity">
    <reaction evidence="1">
        <text>3-amino-2-oxopropyl phosphate + 1-deoxy-D-xylulose 5-phosphate = pyridoxine 5'-phosphate + phosphate + 2 H2O + H(+)</text>
        <dbReference type="Rhea" id="RHEA:15265"/>
        <dbReference type="ChEBI" id="CHEBI:15377"/>
        <dbReference type="ChEBI" id="CHEBI:15378"/>
        <dbReference type="ChEBI" id="CHEBI:43474"/>
        <dbReference type="ChEBI" id="CHEBI:57279"/>
        <dbReference type="ChEBI" id="CHEBI:57792"/>
        <dbReference type="ChEBI" id="CHEBI:58589"/>
        <dbReference type="EC" id="2.6.99.2"/>
    </reaction>
</comment>
<comment type="pathway">
    <text evidence="1">Cofactor biosynthesis; pyridoxine 5'-phosphate biosynthesis; pyridoxine 5'-phosphate from D-erythrose 4-phosphate: step 5/5.</text>
</comment>
<comment type="subunit">
    <text evidence="1">Homooctamer; tetramer of dimers.</text>
</comment>
<comment type="subcellular location">
    <subcellularLocation>
        <location evidence="1">Cytoplasm</location>
    </subcellularLocation>
</comment>
<comment type="similarity">
    <text evidence="1">Belongs to the PNP synthase family.</text>
</comment>
<dbReference type="EC" id="2.6.99.2" evidence="1"/>
<dbReference type="EMBL" id="CP001154">
    <property type="protein sequence ID" value="ACO74457.1"/>
    <property type="molecule type" value="Genomic_DNA"/>
</dbReference>
<dbReference type="RefSeq" id="WP_012696943.1">
    <property type="nucleotide sequence ID" value="NC_012559.1"/>
</dbReference>
<dbReference type="SMR" id="C1D7L7"/>
<dbReference type="STRING" id="557598.LHK_01468"/>
<dbReference type="KEGG" id="lhk:LHK_01468"/>
<dbReference type="eggNOG" id="COG0854">
    <property type="taxonomic scope" value="Bacteria"/>
</dbReference>
<dbReference type="HOGENOM" id="CLU_074563_0_0_4"/>
<dbReference type="UniPathway" id="UPA00244">
    <property type="reaction ID" value="UER00313"/>
</dbReference>
<dbReference type="Proteomes" id="UP000002010">
    <property type="component" value="Chromosome"/>
</dbReference>
<dbReference type="GO" id="GO:0005829">
    <property type="term" value="C:cytosol"/>
    <property type="evidence" value="ECO:0007669"/>
    <property type="project" value="TreeGrafter"/>
</dbReference>
<dbReference type="GO" id="GO:0033856">
    <property type="term" value="F:pyridoxine 5'-phosphate synthase activity"/>
    <property type="evidence" value="ECO:0007669"/>
    <property type="project" value="UniProtKB-EC"/>
</dbReference>
<dbReference type="GO" id="GO:0008615">
    <property type="term" value="P:pyridoxine biosynthetic process"/>
    <property type="evidence" value="ECO:0007669"/>
    <property type="project" value="UniProtKB-UniRule"/>
</dbReference>
<dbReference type="CDD" id="cd00003">
    <property type="entry name" value="PNPsynthase"/>
    <property type="match status" value="1"/>
</dbReference>
<dbReference type="Gene3D" id="3.20.20.70">
    <property type="entry name" value="Aldolase class I"/>
    <property type="match status" value="1"/>
</dbReference>
<dbReference type="HAMAP" id="MF_00279">
    <property type="entry name" value="PdxJ"/>
    <property type="match status" value="1"/>
</dbReference>
<dbReference type="InterPro" id="IPR013785">
    <property type="entry name" value="Aldolase_TIM"/>
</dbReference>
<dbReference type="InterPro" id="IPR004569">
    <property type="entry name" value="PyrdxlP_synth_PdxJ"/>
</dbReference>
<dbReference type="InterPro" id="IPR036130">
    <property type="entry name" value="Pyridoxine-5'_phos_synth"/>
</dbReference>
<dbReference type="NCBIfam" id="TIGR00559">
    <property type="entry name" value="pdxJ"/>
    <property type="match status" value="1"/>
</dbReference>
<dbReference type="NCBIfam" id="NF003623">
    <property type="entry name" value="PRK05265.1-1"/>
    <property type="match status" value="1"/>
</dbReference>
<dbReference type="NCBIfam" id="NF003625">
    <property type="entry name" value="PRK05265.1-3"/>
    <property type="match status" value="1"/>
</dbReference>
<dbReference type="NCBIfam" id="NF003627">
    <property type="entry name" value="PRK05265.1-5"/>
    <property type="match status" value="1"/>
</dbReference>
<dbReference type="PANTHER" id="PTHR30456">
    <property type="entry name" value="PYRIDOXINE 5'-PHOSPHATE SYNTHASE"/>
    <property type="match status" value="1"/>
</dbReference>
<dbReference type="PANTHER" id="PTHR30456:SF0">
    <property type="entry name" value="PYRIDOXINE 5'-PHOSPHATE SYNTHASE"/>
    <property type="match status" value="1"/>
</dbReference>
<dbReference type="Pfam" id="PF03740">
    <property type="entry name" value="PdxJ"/>
    <property type="match status" value="1"/>
</dbReference>
<dbReference type="SUPFAM" id="SSF63892">
    <property type="entry name" value="Pyridoxine 5'-phosphate synthase"/>
    <property type="match status" value="1"/>
</dbReference>
<evidence type="ECO:0000255" key="1">
    <source>
        <dbReference type="HAMAP-Rule" id="MF_00279"/>
    </source>
</evidence>
<keyword id="KW-0963">Cytoplasm</keyword>
<keyword id="KW-0664">Pyridoxine biosynthesis</keyword>
<keyword id="KW-1185">Reference proteome</keyword>
<keyword id="KW-0808">Transferase</keyword>
<accession>C1D7L7</accession>
<protein>
    <recommendedName>
        <fullName evidence="1">Pyridoxine 5'-phosphate synthase</fullName>
        <shortName evidence="1">PNP synthase</shortName>
        <ecNumber evidence="1">2.6.99.2</ecNumber>
    </recommendedName>
</protein>
<reference key="1">
    <citation type="journal article" date="2009" name="PLoS Genet.">
        <title>The complete genome and proteome of Laribacter hongkongensis reveal potential mechanisms for adaptations to different temperatures and habitats.</title>
        <authorList>
            <person name="Woo P.C.Y."/>
            <person name="Lau S.K.P."/>
            <person name="Tse H."/>
            <person name="Teng J.L.L."/>
            <person name="Curreem S.O."/>
            <person name="Tsang A.K.L."/>
            <person name="Fan R.Y.Y."/>
            <person name="Wong G.K.M."/>
            <person name="Huang Y."/>
            <person name="Loman N.J."/>
            <person name="Snyder L.A.S."/>
            <person name="Cai J.J."/>
            <person name="Huang J.-D."/>
            <person name="Mak W."/>
            <person name="Pallen M.J."/>
            <person name="Lok S."/>
            <person name="Yuen K.-Y."/>
        </authorList>
    </citation>
    <scope>NUCLEOTIDE SEQUENCE [LARGE SCALE GENOMIC DNA]</scope>
    <source>
        <strain>HLHK9</strain>
    </source>
</reference>
<organism>
    <name type="scientific">Laribacter hongkongensis (strain HLHK9)</name>
    <dbReference type="NCBI Taxonomy" id="557598"/>
    <lineage>
        <taxon>Bacteria</taxon>
        <taxon>Pseudomonadati</taxon>
        <taxon>Pseudomonadota</taxon>
        <taxon>Betaproteobacteria</taxon>
        <taxon>Neisseriales</taxon>
        <taxon>Aquaspirillaceae</taxon>
        <taxon>Laribacter</taxon>
    </lineage>
</organism>
<gene>
    <name evidence="1" type="primary">pdxJ</name>
    <name type="ordered locus">LHK_01468</name>
</gene>
<sequence>MILLGVNIDHVATLRNARGTRYPSPVEAALVAETAGADLITLHLREDRRHIKDDDLAVMRAAIKTRMNLEMALTDEMLDNALRVLPQDVCIVPEKREELTTEGGLDVIRYFDRIADFTRQLQAKGIRVSLFIDPDDEQIKASHETGATVVELHTGRYADAESHDIRQRELTRIRHAAIVGVDLGLVVNAGHGLSYHNVQPVAAIREIRELNIGHAIVAHALMVGFAPAVREMKALMVEARHNAA</sequence>